<reference key="1">
    <citation type="journal article" date="1999" name="Nature">
        <title>Sequence and analysis of chromosome 2 of the plant Arabidopsis thaliana.</title>
        <authorList>
            <person name="Lin X."/>
            <person name="Kaul S."/>
            <person name="Rounsley S.D."/>
            <person name="Shea T.P."/>
            <person name="Benito M.-I."/>
            <person name="Town C.D."/>
            <person name="Fujii C.Y."/>
            <person name="Mason T.M."/>
            <person name="Bowman C.L."/>
            <person name="Barnstead M.E."/>
            <person name="Feldblyum T.V."/>
            <person name="Buell C.R."/>
            <person name="Ketchum K.A."/>
            <person name="Lee J.J."/>
            <person name="Ronning C.M."/>
            <person name="Koo H.L."/>
            <person name="Moffat K.S."/>
            <person name="Cronin L.A."/>
            <person name="Shen M."/>
            <person name="Pai G."/>
            <person name="Van Aken S."/>
            <person name="Umayam L."/>
            <person name="Tallon L.J."/>
            <person name="Gill J.E."/>
            <person name="Adams M.D."/>
            <person name="Carrera A.J."/>
            <person name="Creasy T.H."/>
            <person name="Goodman H.M."/>
            <person name="Somerville C.R."/>
            <person name="Copenhaver G.P."/>
            <person name="Preuss D."/>
            <person name="Nierman W.C."/>
            <person name="White O."/>
            <person name="Eisen J.A."/>
            <person name="Salzberg S.L."/>
            <person name="Fraser C.M."/>
            <person name="Venter J.C."/>
        </authorList>
    </citation>
    <scope>NUCLEOTIDE SEQUENCE [LARGE SCALE GENOMIC DNA]</scope>
    <source>
        <strain>cv. Columbia</strain>
    </source>
</reference>
<reference key="2">
    <citation type="journal article" date="2017" name="Plant J.">
        <title>Araport11: a complete reannotation of the Arabidopsis thaliana reference genome.</title>
        <authorList>
            <person name="Cheng C.Y."/>
            <person name="Krishnakumar V."/>
            <person name="Chan A.P."/>
            <person name="Thibaud-Nissen F."/>
            <person name="Schobel S."/>
            <person name="Town C.D."/>
        </authorList>
    </citation>
    <scope>GENOME REANNOTATION</scope>
    <source>
        <strain>cv. Columbia</strain>
    </source>
</reference>
<reference key="3">
    <citation type="journal article" date="2003" name="Science">
        <title>Empirical analysis of transcriptional activity in the Arabidopsis genome.</title>
        <authorList>
            <person name="Yamada K."/>
            <person name="Lim J."/>
            <person name="Dale J.M."/>
            <person name="Chen H."/>
            <person name="Shinn P."/>
            <person name="Palm C.J."/>
            <person name="Southwick A.M."/>
            <person name="Wu H.C."/>
            <person name="Kim C.J."/>
            <person name="Nguyen M."/>
            <person name="Pham P.K."/>
            <person name="Cheuk R.F."/>
            <person name="Karlin-Newmann G."/>
            <person name="Liu S.X."/>
            <person name="Lam B."/>
            <person name="Sakano H."/>
            <person name="Wu T."/>
            <person name="Yu G."/>
            <person name="Miranda M."/>
            <person name="Quach H.L."/>
            <person name="Tripp M."/>
            <person name="Chang C.H."/>
            <person name="Lee J.M."/>
            <person name="Toriumi M.J."/>
            <person name="Chan M.M."/>
            <person name="Tang C.C."/>
            <person name="Onodera C.S."/>
            <person name="Deng J.M."/>
            <person name="Akiyama K."/>
            <person name="Ansari Y."/>
            <person name="Arakawa T."/>
            <person name="Banh J."/>
            <person name="Banno F."/>
            <person name="Bowser L."/>
            <person name="Brooks S.Y."/>
            <person name="Carninci P."/>
            <person name="Chao Q."/>
            <person name="Choy N."/>
            <person name="Enju A."/>
            <person name="Goldsmith A.D."/>
            <person name="Gurjal M."/>
            <person name="Hansen N.F."/>
            <person name="Hayashizaki Y."/>
            <person name="Johnson-Hopson C."/>
            <person name="Hsuan V.W."/>
            <person name="Iida K."/>
            <person name="Karnes M."/>
            <person name="Khan S."/>
            <person name="Koesema E."/>
            <person name="Ishida J."/>
            <person name="Jiang P.X."/>
            <person name="Jones T."/>
            <person name="Kawai J."/>
            <person name="Kamiya A."/>
            <person name="Meyers C."/>
            <person name="Nakajima M."/>
            <person name="Narusaka M."/>
            <person name="Seki M."/>
            <person name="Sakurai T."/>
            <person name="Satou M."/>
            <person name="Tamse R."/>
            <person name="Vaysberg M."/>
            <person name="Wallender E.K."/>
            <person name="Wong C."/>
            <person name="Yamamura Y."/>
            <person name="Yuan S."/>
            <person name="Shinozaki K."/>
            <person name="Davis R.W."/>
            <person name="Theologis A."/>
            <person name="Ecker J.R."/>
        </authorList>
    </citation>
    <scope>NUCLEOTIDE SEQUENCE [LARGE SCALE MRNA]</scope>
    <source>
        <strain>cv. Columbia</strain>
    </source>
</reference>
<reference key="4">
    <citation type="journal article" date="2001" name="Plant Physiol.">
        <title>A superfamily of proteins with novel cysteine-rich repeats.</title>
        <authorList>
            <person name="Chen Z."/>
        </authorList>
    </citation>
    <scope>GENE FAMILY ORGANIZATION</scope>
    <scope>NOMENCLATURE</scope>
    <scope>CAUTION</scope>
</reference>
<reference key="5">
    <citation type="journal article" date="2008" name="Plant Signal. Behav.">
        <title>Symplastic domains in the Arabidopsis shoot apical meristem correlate with PDLP1 expression patterns.</title>
        <authorList>
            <person name="Bayer E."/>
            <person name="Thomas C."/>
            <person name="Maule A."/>
        </authorList>
    </citation>
    <scope>TISSUE SPECIFICITY</scope>
    <scope>DEVELOPMENTAL STAGE</scope>
</reference>
<reference key="6">
    <citation type="journal article" date="2008" name="PLoS Biol.">
        <title>Specific targeting of a plasmodesmal protein affecting cell-to-cell communication.</title>
        <authorList>
            <person name="Thomas C.L."/>
            <person name="Bayer E.M."/>
            <person name="Ritzenthaler C."/>
            <person name="Fernandez-Calvino L."/>
            <person name="Maule A.J."/>
        </authorList>
    </citation>
    <scope>SUBCELLULAR LOCATION</scope>
    <scope>DISRUPTION PHENOTYPE</scope>
</reference>
<reference key="7">
    <citation type="journal article" date="2010" name="PLoS Pathog.">
        <title>A family of plasmodesmal proteins with receptor-like properties for plant viral movement proteins.</title>
        <authorList>
            <person name="Amari K."/>
            <person name="Boutant E."/>
            <person name="Hofmann C."/>
            <person name="Schmitt-Keichinger C."/>
            <person name="Fernandez-Calvino L."/>
            <person name="Didier P."/>
            <person name="Lerich A."/>
            <person name="Mutterer J."/>
            <person name="Thomas C.L."/>
            <person name="Heinlein M."/>
            <person name="Mely Y."/>
            <person name="Maule A.J."/>
            <person name="Ritzenthaler C."/>
        </authorList>
    </citation>
    <scope>SUBCELLULAR LOCATION</scope>
    <scope>INTERACTION WITH GRAPEVINE FANLEAF VIRUS 2B-MP PROTEIN</scope>
    <scope>DISRUPTION PHENOTYPE</scope>
    <source>
        <strain>cv. Columbia</strain>
    </source>
</reference>
<reference key="8">
    <citation type="journal article" date="2014" name="PLoS Pathog.">
        <title>The plasmodesmal protein PDLP1 localises to haustoria-associated membranes during downy mildew infection and regulates callose deposition.</title>
        <authorList>
            <person name="Caillaud M.C."/>
            <person name="Wirthmueller L."/>
            <person name="Sklenar J."/>
            <person name="Findlay K."/>
            <person name="Piquerez S.J."/>
            <person name="Jones A.M."/>
            <person name="Robatzek S."/>
            <person name="Jones J.D."/>
            <person name="Faulkner C."/>
        </authorList>
    </citation>
    <scope>SUBCELLULAR LOCATION</scope>
    <source>
        <strain>cv. Columbia</strain>
    </source>
</reference>
<organism>
    <name type="scientific">Arabidopsis thaliana</name>
    <name type="common">Mouse-ear cress</name>
    <dbReference type="NCBI Taxonomy" id="3702"/>
    <lineage>
        <taxon>Eukaryota</taxon>
        <taxon>Viridiplantae</taxon>
        <taxon>Streptophyta</taxon>
        <taxon>Embryophyta</taxon>
        <taxon>Tracheophyta</taxon>
        <taxon>Spermatophyta</taxon>
        <taxon>Magnoliopsida</taxon>
        <taxon>eudicotyledons</taxon>
        <taxon>Gunneridae</taxon>
        <taxon>Pentapetalae</taxon>
        <taxon>rosids</taxon>
        <taxon>malvids</taxon>
        <taxon>Brassicales</taxon>
        <taxon>Brassicaceae</taxon>
        <taxon>Camelineae</taxon>
        <taxon>Arabidopsis</taxon>
    </lineage>
</organism>
<sequence>MGFYSLKQLLLLYIIIMALFSDLKLAKSSSPEYTNLIYKGCARQRLSDPSGLYSQALSAMYGLLVTQSTKTRFYKTTTGTTSQTSVTGLFQCRGDLSNNDCYNCVSRLPVLSGKLCGKTIAARVQLSGCYLLYEISGFAQISGMELLFKTCGKNNVAGTGFEQRRDTAFGVMQNGVVQGHGFYATTYESVYVLGQCEGDIGDSDCSGCIKNALQRAQVECGSSISGQIYLHKCFVGYSFYPNGVPKRSSPYPSSGSSGSSSSSSSSGTTGKTVAIIVGGTAGVGFLVICLLFVKNLMKKKYDDY</sequence>
<comment type="function">
    <text evidence="1">Modulates cell-to-cell trafficking.</text>
</comment>
<comment type="subunit">
    <text evidence="11">(Microbial infection) Interacts with Grapevine fanleaf virus (GFLV) 2B-MP.</text>
</comment>
<comment type="subcellular location">
    <subcellularLocation>
        <location evidence="1">Cell membrane</location>
        <topology evidence="1">Single-pass type I membrane protein</topology>
    </subcellularLocation>
    <subcellularLocation>
        <location evidence="4 6 7">Cell junction</location>
        <location evidence="4 6 7">Plasmodesma</location>
    </subcellularLocation>
    <text>Co-localizes with the Grapevine fanleaf virus (GFLV) 2B-MP at the base of tubules within modified plasmodesmata.</text>
</comment>
<comment type="tissue specificity">
    <text evidence="5">Highly expressed in inflorescence pedacel and shoot apex. Expressed in the outermost L1 layer of the shoot apical meristem and in the epidermis of bulging floral primordia. Within the L1, expression was restricted to the peripheral zone (at protein level).</text>
</comment>
<comment type="developmental stage">
    <text evidence="5">Expression in the epidermis of floral primordia changes through development from being weakly expressed in the youngest the floral organs, with possibly a stronger expression on the abaxial side (P1, P2 stage) to being relatively strongly expressed in both the adaxial and abaxial epidermis at later stages.</text>
</comment>
<comment type="disruption phenotype">
    <text evidence="4 6">Both pdlp2 and pdlp3, and pdlp1 and pdlp3 double mutants show altered protein diffusion (measured using GFP). In pdlp1, pdlp2 and pdlp3 triple mutant there is inhibition of GFLV 2BMP tubule formation. Virus cell-to-cell movement is negatively affected. There is a 22% reduction in mean surface area of infection foci by GFLV and an approximately 12-hour-delay in long distance movement in comparison to wild-type plants. There is also a systemic delay in Cauliflower mosaic virus (CaMV) spread.</text>
</comment>
<comment type="similarity">
    <text evidence="10">Belongs to the cysteine-rich repeat secretory protein family. Plasmodesmata-located proteins (PDLD) subfamily.</text>
</comment>
<comment type="caution">
    <text evidence="10">PDLPs were initially named Cysteine-rich secretory proteins based on a classification work that failed to predict the transmembrane region at the C-terminus (PubMed:11402176). However, it was later shown that PDLPs are membrane proteins.</text>
</comment>
<accession>O22784</accession>
<accession>Q94B68</accession>
<protein>
    <recommendedName>
        <fullName>Plasmodesmata-located protein 3</fullName>
        <shortName evidence="9">PD-located protein 3</shortName>
    </recommendedName>
    <alternativeName>
        <fullName evidence="8">Cysteine-rich repeat secretory protein 11</fullName>
    </alternativeName>
</protein>
<gene>
    <name evidence="9" type="primary">PDLP3</name>
    <name evidence="8" type="synonym">CRRSP11</name>
    <name type="ordered locus">At2g33330</name>
    <name type="ORF">F4P9.10</name>
</gene>
<evidence type="ECO:0000250" key="1">
    <source>
        <dbReference type="UniProtKB" id="Q8GXV7"/>
    </source>
</evidence>
<evidence type="ECO:0000255" key="2"/>
<evidence type="ECO:0000255" key="3">
    <source>
        <dbReference type="PROSITE-ProRule" id="PRU00806"/>
    </source>
</evidence>
<evidence type="ECO:0000269" key="4">
    <source>
    </source>
</evidence>
<evidence type="ECO:0000269" key="5">
    <source>
    </source>
</evidence>
<evidence type="ECO:0000269" key="6">
    <source>
    </source>
</evidence>
<evidence type="ECO:0000269" key="7">
    <source>
    </source>
</evidence>
<evidence type="ECO:0000303" key="8">
    <source>
    </source>
</evidence>
<evidence type="ECO:0000303" key="9">
    <source>
    </source>
</evidence>
<evidence type="ECO:0000305" key="10"/>
<evidence type="ECO:0000305" key="11">
    <source>
    </source>
</evidence>
<feature type="signal peptide" evidence="2">
    <location>
        <begin position="1"/>
        <end position="26"/>
    </location>
</feature>
<feature type="chain" id="PRO_0000296139" description="Plasmodesmata-located protein 3">
    <location>
        <begin position="27"/>
        <end position="304"/>
    </location>
</feature>
<feature type="topological domain" description="Extracellular" evidence="1">
    <location>
        <begin position="27"/>
        <end position="272"/>
    </location>
</feature>
<feature type="transmembrane region" description="Helical" evidence="2">
    <location>
        <begin position="273"/>
        <end position="293"/>
    </location>
</feature>
<feature type="topological domain" description="Cytoplasmic" evidence="1">
    <location>
        <begin position="294"/>
        <end position="304"/>
    </location>
</feature>
<feature type="domain" description="Gnk2-homologous 1" evidence="3">
    <location>
        <begin position="34"/>
        <end position="138"/>
    </location>
</feature>
<feature type="domain" description="Gnk2-homologous 2" evidence="3">
    <location>
        <begin position="143"/>
        <end position="242"/>
    </location>
</feature>
<feature type="region of interest" description="Necessary and sufficient for plasmodesmal targeting" evidence="1">
    <location>
        <begin position="273"/>
        <end position="293"/>
    </location>
</feature>
<feature type="disulfide bond" evidence="3">
    <location>
        <begin position="41"/>
        <end position="116"/>
    </location>
</feature>
<feature type="disulfide bond" evidence="3">
    <location>
        <begin position="92"/>
        <end position="101"/>
    </location>
</feature>
<feature type="disulfide bond" evidence="3">
    <location>
        <begin position="104"/>
        <end position="129"/>
    </location>
</feature>
<feature type="disulfide bond" evidence="3">
    <location>
        <begin position="151"/>
        <end position="220"/>
    </location>
</feature>
<feature type="disulfide bond" evidence="3">
    <location>
        <begin position="196"/>
        <end position="205"/>
    </location>
</feature>
<feature type="disulfide bond" evidence="3">
    <location>
        <begin position="208"/>
        <end position="233"/>
    </location>
</feature>
<keyword id="KW-0965">Cell junction</keyword>
<keyword id="KW-1003">Cell membrane</keyword>
<keyword id="KW-1015">Disulfide bond</keyword>
<keyword id="KW-0945">Host-virus interaction</keyword>
<keyword id="KW-0472">Membrane</keyword>
<keyword id="KW-1185">Reference proteome</keyword>
<keyword id="KW-0677">Repeat</keyword>
<keyword id="KW-0732">Signal</keyword>
<keyword id="KW-0812">Transmembrane</keyword>
<keyword id="KW-1133">Transmembrane helix</keyword>
<keyword id="KW-0813">Transport</keyword>
<dbReference type="EMBL" id="AC002332">
    <property type="protein sequence ID" value="AAB80651.2"/>
    <property type="molecule type" value="Genomic_DNA"/>
</dbReference>
<dbReference type="EMBL" id="CP002685">
    <property type="protein sequence ID" value="AEC08816.1"/>
    <property type="molecule type" value="Genomic_DNA"/>
</dbReference>
<dbReference type="EMBL" id="AY042813">
    <property type="protein sequence ID" value="AAK68753.1"/>
    <property type="molecule type" value="mRNA"/>
</dbReference>
<dbReference type="EMBL" id="AY081690">
    <property type="protein sequence ID" value="AAM10252.1"/>
    <property type="molecule type" value="mRNA"/>
</dbReference>
<dbReference type="PIR" id="B84744">
    <property type="entry name" value="B84744"/>
</dbReference>
<dbReference type="RefSeq" id="NP_565764.1">
    <property type="nucleotide sequence ID" value="NM_128893.4"/>
</dbReference>
<dbReference type="SMR" id="O22784"/>
<dbReference type="BioGRID" id="3243">
    <property type="interactions" value="6"/>
</dbReference>
<dbReference type="FunCoup" id="O22784">
    <property type="interactions" value="1557"/>
</dbReference>
<dbReference type="IntAct" id="O22784">
    <property type="interactions" value="5"/>
</dbReference>
<dbReference type="STRING" id="3702.O22784"/>
<dbReference type="TCDB" id="1.I.2.1.1">
    <property type="family name" value="the plant plasmodesmata (ppd) family"/>
</dbReference>
<dbReference type="PaxDb" id="3702-AT2G33330.1"/>
<dbReference type="ProteomicsDB" id="224523"/>
<dbReference type="EnsemblPlants" id="AT2G33330.1">
    <property type="protein sequence ID" value="AT2G33330.1"/>
    <property type="gene ID" value="AT2G33330"/>
</dbReference>
<dbReference type="GeneID" id="817896"/>
<dbReference type="Gramene" id="AT2G33330.1">
    <property type="protein sequence ID" value="AT2G33330.1"/>
    <property type="gene ID" value="AT2G33330"/>
</dbReference>
<dbReference type="KEGG" id="ath:AT2G33330"/>
<dbReference type="Araport" id="AT2G33330"/>
<dbReference type="TAIR" id="AT2G33330">
    <property type="gene designation" value="PDLP3"/>
</dbReference>
<dbReference type="eggNOG" id="ENOG502QUWZ">
    <property type="taxonomic scope" value="Eukaryota"/>
</dbReference>
<dbReference type="HOGENOM" id="CLU_000288_33_1_1"/>
<dbReference type="InParanoid" id="O22784"/>
<dbReference type="OMA" id="EYTNLIY"/>
<dbReference type="PhylomeDB" id="O22784"/>
<dbReference type="PRO" id="PR:O22784"/>
<dbReference type="Proteomes" id="UP000006548">
    <property type="component" value="Chromosome 2"/>
</dbReference>
<dbReference type="ExpressionAtlas" id="O22784">
    <property type="expression patterns" value="baseline and differential"/>
</dbReference>
<dbReference type="GO" id="GO:0005886">
    <property type="term" value="C:plasma membrane"/>
    <property type="evidence" value="ECO:0007669"/>
    <property type="project" value="UniProtKB-SubCell"/>
</dbReference>
<dbReference type="GO" id="GO:0009506">
    <property type="term" value="C:plasmodesma"/>
    <property type="evidence" value="ECO:0000314"/>
    <property type="project" value="TAIR"/>
</dbReference>
<dbReference type="GO" id="GO:0010497">
    <property type="term" value="P:plasmodesmata-mediated intercellular transport"/>
    <property type="evidence" value="ECO:0000316"/>
    <property type="project" value="TAIR"/>
</dbReference>
<dbReference type="GO" id="GO:0046739">
    <property type="term" value="P:transport of virus in multicellular host"/>
    <property type="evidence" value="ECO:0000316"/>
    <property type="project" value="TAIR"/>
</dbReference>
<dbReference type="CDD" id="cd23509">
    <property type="entry name" value="Gnk2-like"/>
    <property type="match status" value="2"/>
</dbReference>
<dbReference type="FunFam" id="3.30.430.20:FF:000001">
    <property type="entry name" value="cysteine-rich repeat secretory protein 3"/>
    <property type="match status" value="1"/>
</dbReference>
<dbReference type="FunFam" id="3.30.430.20:FF:000008">
    <property type="entry name" value="cysteine-rich repeat secretory protein 3"/>
    <property type="match status" value="1"/>
</dbReference>
<dbReference type="Gene3D" id="3.30.430.20">
    <property type="entry name" value="Gnk2 domain, C-X8-C-X2-C motif"/>
    <property type="match status" value="2"/>
</dbReference>
<dbReference type="InterPro" id="IPR051378">
    <property type="entry name" value="Cell2Cell_Antifungal"/>
</dbReference>
<dbReference type="InterPro" id="IPR002902">
    <property type="entry name" value="GNK2"/>
</dbReference>
<dbReference type="InterPro" id="IPR038408">
    <property type="entry name" value="GNK2_sf"/>
</dbReference>
<dbReference type="PANTHER" id="PTHR32080">
    <property type="entry name" value="ANTIFUNGAL PROTEIN GINKBILOBIN-2-LIKE"/>
    <property type="match status" value="1"/>
</dbReference>
<dbReference type="PANTHER" id="PTHR32080:SF62">
    <property type="entry name" value="PLASMODESMATA-LOCATED PROTEIN 3"/>
    <property type="match status" value="1"/>
</dbReference>
<dbReference type="Pfam" id="PF01657">
    <property type="entry name" value="Stress-antifung"/>
    <property type="match status" value="2"/>
</dbReference>
<dbReference type="PROSITE" id="PS51473">
    <property type="entry name" value="GNK2"/>
    <property type="match status" value="2"/>
</dbReference>
<proteinExistence type="evidence at protein level"/>
<name>PDLP3_ARATH</name>